<sequence>MKKHGVLNSEIASVLASLGHTDTIVIADCGLPIPAGVKRIDLAVEIGKPSFLDVLQVVADDMAIEKVTLAEEVINNNVEVNKEIELKLIEPAFEYVCHEQFKEHTKKAKAIIRTGEATPYANVILHAGVIF</sequence>
<accession>A0R9V2</accession>
<name>RBSD_BACAH</name>
<evidence type="ECO:0000255" key="1">
    <source>
        <dbReference type="HAMAP-Rule" id="MF_01661"/>
    </source>
</evidence>
<dbReference type="EC" id="5.4.99.62" evidence="1"/>
<dbReference type="EMBL" id="CP000485">
    <property type="protein sequence ID" value="ABK83995.1"/>
    <property type="molecule type" value="Genomic_DNA"/>
</dbReference>
<dbReference type="RefSeq" id="WP_000716158.1">
    <property type="nucleotide sequence ID" value="NC_008600.1"/>
</dbReference>
<dbReference type="SMR" id="A0R9V2"/>
<dbReference type="KEGG" id="btl:BALH_0608"/>
<dbReference type="HOGENOM" id="CLU_135498_0_0_9"/>
<dbReference type="UniPathway" id="UPA00916">
    <property type="reaction ID" value="UER00888"/>
</dbReference>
<dbReference type="GO" id="GO:0005829">
    <property type="term" value="C:cytosol"/>
    <property type="evidence" value="ECO:0007669"/>
    <property type="project" value="TreeGrafter"/>
</dbReference>
<dbReference type="GO" id="GO:0062193">
    <property type="term" value="F:D-ribose pyranase activity"/>
    <property type="evidence" value="ECO:0007669"/>
    <property type="project" value="UniProtKB-EC"/>
</dbReference>
<dbReference type="GO" id="GO:0016872">
    <property type="term" value="F:intramolecular lyase activity"/>
    <property type="evidence" value="ECO:0007669"/>
    <property type="project" value="UniProtKB-UniRule"/>
</dbReference>
<dbReference type="GO" id="GO:0048029">
    <property type="term" value="F:monosaccharide binding"/>
    <property type="evidence" value="ECO:0007669"/>
    <property type="project" value="InterPro"/>
</dbReference>
<dbReference type="GO" id="GO:0019303">
    <property type="term" value="P:D-ribose catabolic process"/>
    <property type="evidence" value="ECO:0007669"/>
    <property type="project" value="UniProtKB-UniRule"/>
</dbReference>
<dbReference type="FunFam" id="3.40.1650.10:FF:000003">
    <property type="entry name" value="D-ribose pyranase"/>
    <property type="match status" value="1"/>
</dbReference>
<dbReference type="Gene3D" id="3.40.1650.10">
    <property type="entry name" value="RbsD-like domain"/>
    <property type="match status" value="1"/>
</dbReference>
<dbReference type="HAMAP" id="MF_01661">
    <property type="entry name" value="D_rib_pyranase"/>
    <property type="match status" value="1"/>
</dbReference>
<dbReference type="InterPro" id="IPR023064">
    <property type="entry name" value="D-ribose_pyranase"/>
</dbReference>
<dbReference type="InterPro" id="IPR023750">
    <property type="entry name" value="RbsD-like_sf"/>
</dbReference>
<dbReference type="InterPro" id="IPR007721">
    <property type="entry name" value="RbsD_FucU"/>
</dbReference>
<dbReference type="NCBIfam" id="NF008761">
    <property type="entry name" value="PRK11797.1"/>
    <property type="match status" value="1"/>
</dbReference>
<dbReference type="PANTHER" id="PTHR37831">
    <property type="entry name" value="D-RIBOSE PYRANASE"/>
    <property type="match status" value="1"/>
</dbReference>
<dbReference type="PANTHER" id="PTHR37831:SF1">
    <property type="entry name" value="D-RIBOSE PYRANASE"/>
    <property type="match status" value="1"/>
</dbReference>
<dbReference type="Pfam" id="PF05025">
    <property type="entry name" value="RbsD_FucU"/>
    <property type="match status" value="1"/>
</dbReference>
<dbReference type="SUPFAM" id="SSF102546">
    <property type="entry name" value="RbsD-like"/>
    <property type="match status" value="1"/>
</dbReference>
<proteinExistence type="inferred from homology"/>
<keyword id="KW-0119">Carbohydrate metabolism</keyword>
<keyword id="KW-0963">Cytoplasm</keyword>
<keyword id="KW-0413">Isomerase</keyword>
<organism>
    <name type="scientific">Bacillus thuringiensis (strain Al Hakam)</name>
    <dbReference type="NCBI Taxonomy" id="412694"/>
    <lineage>
        <taxon>Bacteria</taxon>
        <taxon>Bacillati</taxon>
        <taxon>Bacillota</taxon>
        <taxon>Bacilli</taxon>
        <taxon>Bacillales</taxon>
        <taxon>Bacillaceae</taxon>
        <taxon>Bacillus</taxon>
        <taxon>Bacillus cereus group</taxon>
    </lineage>
</organism>
<reference key="1">
    <citation type="journal article" date="2007" name="J. Bacteriol.">
        <title>The complete genome sequence of Bacillus thuringiensis Al Hakam.</title>
        <authorList>
            <person name="Challacombe J.F."/>
            <person name="Altherr M.R."/>
            <person name="Xie G."/>
            <person name="Bhotika S.S."/>
            <person name="Brown N."/>
            <person name="Bruce D."/>
            <person name="Campbell C.S."/>
            <person name="Campbell M.L."/>
            <person name="Chen J."/>
            <person name="Chertkov O."/>
            <person name="Cleland C."/>
            <person name="Dimitrijevic M."/>
            <person name="Doggett N.A."/>
            <person name="Fawcett J.J."/>
            <person name="Glavina T."/>
            <person name="Goodwin L.A."/>
            <person name="Green L.D."/>
            <person name="Han C.S."/>
            <person name="Hill K.K."/>
            <person name="Hitchcock P."/>
            <person name="Jackson P.J."/>
            <person name="Keim P."/>
            <person name="Kewalramani A.R."/>
            <person name="Longmire J."/>
            <person name="Lucas S."/>
            <person name="Malfatti S."/>
            <person name="Martinez D."/>
            <person name="McMurry K."/>
            <person name="Meincke L.J."/>
            <person name="Misra M."/>
            <person name="Moseman B.L."/>
            <person name="Mundt M."/>
            <person name="Munk A.C."/>
            <person name="Okinaka R.T."/>
            <person name="Parson-Quintana B."/>
            <person name="Reilly L.P."/>
            <person name="Richardson P."/>
            <person name="Robinson D.L."/>
            <person name="Saunders E."/>
            <person name="Tapia R."/>
            <person name="Tesmer J.G."/>
            <person name="Thayer N."/>
            <person name="Thompson L.S."/>
            <person name="Tice H."/>
            <person name="Ticknor L.O."/>
            <person name="Wills P.L."/>
            <person name="Gilna P."/>
            <person name="Brettin T.S."/>
        </authorList>
    </citation>
    <scope>NUCLEOTIDE SEQUENCE [LARGE SCALE GENOMIC DNA]</scope>
    <source>
        <strain>Al Hakam</strain>
    </source>
</reference>
<feature type="chain" id="PRO_0000346179" description="D-ribose pyranase">
    <location>
        <begin position="1"/>
        <end position="131"/>
    </location>
</feature>
<feature type="active site" description="Proton donor" evidence="1">
    <location>
        <position position="20"/>
    </location>
</feature>
<feature type="binding site" evidence="1">
    <location>
        <position position="28"/>
    </location>
    <ligand>
        <name>substrate</name>
    </ligand>
</feature>
<feature type="binding site" evidence="1">
    <location>
        <position position="98"/>
    </location>
    <ligand>
        <name>substrate</name>
    </ligand>
</feature>
<feature type="binding site" evidence="1">
    <location>
        <begin position="120"/>
        <end position="122"/>
    </location>
    <ligand>
        <name>substrate</name>
    </ligand>
</feature>
<protein>
    <recommendedName>
        <fullName evidence="1">D-ribose pyranase</fullName>
        <ecNumber evidence="1">5.4.99.62</ecNumber>
    </recommendedName>
</protein>
<gene>
    <name evidence="1" type="primary">rbsD</name>
    <name type="ordered locus">BALH_0608</name>
</gene>
<comment type="function">
    <text evidence="1">Catalyzes the interconversion of beta-pyran and beta-furan forms of D-ribose.</text>
</comment>
<comment type="catalytic activity">
    <reaction evidence="1">
        <text>beta-D-ribopyranose = beta-D-ribofuranose</text>
        <dbReference type="Rhea" id="RHEA:25432"/>
        <dbReference type="ChEBI" id="CHEBI:27476"/>
        <dbReference type="ChEBI" id="CHEBI:47002"/>
        <dbReference type="EC" id="5.4.99.62"/>
    </reaction>
</comment>
<comment type="pathway">
    <text evidence="1">Carbohydrate metabolism; D-ribose degradation; D-ribose 5-phosphate from beta-D-ribopyranose: step 1/2.</text>
</comment>
<comment type="subunit">
    <text evidence="1">Homodecamer.</text>
</comment>
<comment type="subcellular location">
    <subcellularLocation>
        <location evidence="1">Cytoplasm</location>
    </subcellularLocation>
</comment>
<comment type="similarity">
    <text evidence="1">Belongs to the RbsD / FucU family. RbsD subfamily.</text>
</comment>